<name>ZMY12_HUMAN</name>
<feature type="chain" id="PRO_0000218316" description="Zinc finger MYND domain-containing protein 12">
    <location>
        <begin position="1"/>
        <end position="365"/>
    </location>
</feature>
<feature type="repeat" description="TPR 1">
    <location>
        <begin position="172"/>
        <end position="205"/>
    </location>
</feature>
<feature type="repeat" description="TPR 2">
    <location>
        <begin position="214"/>
        <end position="247"/>
    </location>
</feature>
<feature type="zinc finger region" description="MYND-type; atypical" evidence="1">
    <location>
        <begin position="17"/>
        <end position="54"/>
    </location>
</feature>
<feature type="binding site" evidence="1">
    <location>
        <position position="17"/>
    </location>
    <ligand>
        <name>Zn(2+)</name>
        <dbReference type="ChEBI" id="CHEBI:29105"/>
        <label>1</label>
    </ligand>
</feature>
<feature type="binding site" evidence="1">
    <location>
        <position position="20"/>
    </location>
    <ligand>
        <name>Zn(2+)</name>
        <dbReference type="ChEBI" id="CHEBI:29105"/>
        <label>1</label>
    </ligand>
</feature>
<feature type="binding site" evidence="1">
    <location>
        <position position="28"/>
    </location>
    <ligand>
        <name>Zn(2+)</name>
        <dbReference type="ChEBI" id="CHEBI:29105"/>
        <label>2</label>
    </ligand>
</feature>
<feature type="binding site" evidence="1">
    <location>
        <position position="31"/>
    </location>
    <ligand>
        <name>Zn(2+)</name>
        <dbReference type="ChEBI" id="CHEBI:29105"/>
        <label>2</label>
    </ligand>
</feature>
<feature type="binding site" evidence="1">
    <location>
        <position position="37"/>
    </location>
    <ligand>
        <name>Zn(2+)</name>
        <dbReference type="ChEBI" id="CHEBI:29105"/>
        <label>1</label>
    </ligand>
</feature>
<feature type="binding site" evidence="1">
    <location>
        <position position="41"/>
    </location>
    <ligand>
        <name>Zn(2+)</name>
        <dbReference type="ChEBI" id="CHEBI:29105"/>
        <label>1</label>
    </ligand>
</feature>
<feature type="binding site" evidence="1">
    <location>
        <position position="50"/>
    </location>
    <ligand>
        <name>Zn(2+)</name>
        <dbReference type="ChEBI" id="CHEBI:29105"/>
        <label>2</label>
    </ligand>
</feature>
<feature type="binding site" evidence="1">
    <location>
        <position position="54"/>
    </location>
    <ligand>
        <name>Zn(2+)</name>
        <dbReference type="ChEBI" id="CHEBI:29105"/>
        <label>2</label>
    </ligand>
</feature>
<feature type="sequence variant" id="VAR_088858" description="Found in patients with asthenoteratozoospermia; likely pathogenic; severe axonemal disorganization in sperm cells; CFAP70, DNAH1, DNALI1, SPAG6, TTC29 and WDR66 proteins not detected in sperm cells." evidence="5">
    <location>
        <begin position="145"/>
        <end position="365"/>
    </location>
</feature>
<feature type="sequence variant" id="VAR_018425" description="In dbSNP:rs1034268." evidence="2 3 4">
    <original>F</original>
    <variation>L</variation>
    <location>
        <position position="316"/>
    </location>
</feature>
<feature type="sequence conflict" description="In Ref. 1; CAB66792." evidence="6" ref="1">
    <original>L</original>
    <variation>P</variation>
    <location>
        <position position="134"/>
    </location>
</feature>
<feature type="sequence conflict" description="In Ref. 2; BAB71461." evidence="6" ref="2">
    <original>C</original>
    <variation>Y</variation>
    <location>
        <position position="166"/>
    </location>
</feature>
<evidence type="ECO:0000255" key="1">
    <source>
        <dbReference type="PROSITE-ProRule" id="PRU00134"/>
    </source>
</evidence>
<evidence type="ECO:0000269" key="2">
    <source>
    </source>
</evidence>
<evidence type="ECO:0000269" key="3">
    <source>
    </source>
</evidence>
<evidence type="ECO:0000269" key="4">
    <source>
    </source>
</evidence>
<evidence type="ECO:0000269" key="5">
    <source>
    </source>
</evidence>
<evidence type="ECO:0000305" key="6"/>
<gene>
    <name type="primary">ZMYND12</name>
</gene>
<accession>Q9H0C1</accession>
<accession>Q5VUS6</accession>
<accession>Q8TC87</accession>
<accession>Q96M51</accession>
<sequence>MNVIYPLAVPKGRRLCCEVCEAPAERVCAACTVTYYCGVVHQKADWDSIHEKICQLLIPLRTSMPFYNSEEERQHGLQQLQQRQKYLIEFCYTIAQKYLFEGKHEDAVPAALQSLRFRVKLYGLSSVELVPAYLLLAEASLGLGRIVQAEEYLFQAQWTVLKSTDCSNATHSLLHRNLGLLYIAKKNYEEARYHLANDIYFASCAFGTEDIRTSGGYFHLANIFYDLKKLDLADTLYTKVSEIWHAYLNNHYQVLSQAHIQQMDLLGKLFENDTGLDEAQEAEAIRILTSILNIRESTSDKAPQKTIFVLKILVMFYYLMMNSSKAQEYGMRALSLAKEQQLDVHEQSTIQELLSLISTEDHPIT</sequence>
<comment type="function">
    <text evidence="5">Required for sperm flagellum function and male fertility.</text>
</comment>
<comment type="interaction">
    <interactant intactId="EBI-12030590">
        <id>Q9H0C1</id>
    </interactant>
    <interactant intactId="EBI-11096309">
        <id>Q9NYB9-2</id>
        <label>ABI2</label>
    </interactant>
    <organismsDiffer>false</organismsDiffer>
    <experiments>5</experiments>
</comment>
<comment type="interaction">
    <interactant intactId="EBI-12030590">
        <id>Q9H0C1</id>
    </interactant>
    <interactant intactId="EBI-8643161">
        <id>Q9NX04</id>
        <label>AIRIM</label>
    </interactant>
    <organismsDiffer>false</organismsDiffer>
    <experiments>3</experiments>
</comment>
<comment type="interaction">
    <interactant intactId="EBI-12030590">
        <id>Q9H0C1</id>
    </interactant>
    <interactant intactId="EBI-9523517">
        <id>P85298-4</id>
        <label>ARHGAP8</label>
    </interactant>
    <organismsDiffer>false</organismsDiffer>
    <experiments>3</experiments>
</comment>
<comment type="interaction">
    <interactant intactId="EBI-12030590">
        <id>Q9H0C1</id>
    </interactant>
    <interactant intactId="EBI-11942961">
        <id>Q8IUR7-6</id>
        <label>ARMC8</label>
    </interactant>
    <organismsDiffer>false</organismsDiffer>
    <experiments>3</experiments>
</comment>
<comment type="interaction">
    <interactant intactId="EBI-12030590">
        <id>Q9H0C1</id>
    </interactant>
    <interactant intactId="EBI-745689">
        <id>Q7L5A3</id>
        <label>ATOSB</label>
    </interactant>
    <organismsDiffer>false</organismsDiffer>
    <experiments>3</experiments>
</comment>
<comment type="interaction">
    <interactant intactId="EBI-12030590">
        <id>Q9H0C1</id>
    </interactant>
    <interactant intactId="EBI-11991546">
        <id>O00327-8</id>
        <label>BMAL1</label>
    </interactant>
    <organismsDiffer>false</organismsDiffer>
    <experiments>5</experiments>
</comment>
<comment type="interaction">
    <interactant intactId="EBI-12030590">
        <id>Q9H0C1</id>
    </interactant>
    <interactant intactId="EBI-744311">
        <id>Q8IYX3</id>
        <label>CCDC116</label>
    </interactant>
    <organismsDiffer>false</organismsDiffer>
    <experiments>3</experiments>
</comment>
<comment type="interaction">
    <interactant intactId="EBI-12030590">
        <id>Q9H0C1</id>
    </interactant>
    <interactant intactId="EBI-1104933">
        <id>Q8N4L8</id>
        <label>CCDC24</label>
    </interactant>
    <organismsDiffer>false</organismsDiffer>
    <experiments>3</experiments>
</comment>
<comment type="interaction">
    <interactant intactId="EBI-12030590">
        <id>Q9H0C1</id>
    </interactant>
    <interactant intactId="EBI-2321769">
        <id>Q9Y6H1</id>
        <label>CHCHD2</label>
    </interactant>
    <organismsDiffer>false</organismsDiffer>
    <experiments>3</experiments>
</comment>
<comment type="interaction">
    <interactant intactId="EBI-12030590">
        <id>Q9H0C1</id>
    </interactant>
    <interactant intactId="EBI-5453285">
        <id>Q2TBE0</id>
        <label>CWF19L2</label>
    </interactant>
    <organismsDiffer>false</organismsDiffer>
    <experiments>3</experiments>
</comment>
<comment type="interaction">
    <interactant intactId="EBI-12030590">
        <id>Q9H0C1</id>
    </interactant>
    <interactant intactId="EBI-9679045">
        <id>Q9NQL9</id>
        <label>DMRT3</label>
    </interactant>
    <organismsDiffer>false</organismsDiffer>
    <experiments>3</experiments>
</comment>
<comment type="interaction">
    <interactant intactId="EBI-12030590">
        <id>Q9H0C1</id>
    </interactant>
    <interactant intactId="EBI-17280301">
        <id>Q03828</id>
        <label>EVX2</label>
    </interactant>
    <organismsDiffer>false</organismsDiffer>
    <experiments>3</experiments>
</comment>
<comment type="interaction">
    <interactant intactId="EBI-12030590">
        <id>Q9H0C1</id>
    </interactant>
    <interactant intactId="EBI-2807642">
        <id>Q8WU58</id>
        <label>FAM222B</label>
    </interactant>
    <organismsDiffer>false</organismsDiffer>
    <experiments>3</experiments>
</comment>
<comment type="interaction">
    <interactant intactId="EBI-12030590">
        <id>Q9H0C1</id>
    </interactant>
    <interactant intactId="EBI-742802">
        <id>Q9Y247</id>
        <label>FAM50B</label>
    </interactant>
    <organismsDiffer>false</organismsDiffer>
    <experiments>3</experiments>
</comment>
<comment type="interaction">
    <interactant intactId="EBI-12030590">
        <id>Q9H0C1</id>
    </interactant>
    <interactant intactId="EBI-6658203">
        <id>Q86YD7</id>
        <label>FAM90A1</label>
    </interactant>
    <organismsDiffer>false</organismsDiffer>
    <experiments>3</experiments>
</comment>
<comment type="interaction">
    <interactant intactId="EBI-12030590">
        <id>Q9H0C1</id>
    </interactant>
    <interactant intactId="EBI-746309">
        <id>Q92917</id>
        <label>GPKOW</label>
    </interactant>
    <organismsDiffer>false</organismsDiffer>
    <experiments>3</experiments>
</comment>
<comment type="interaction">
    <interactant intactId="EBI-12030590">
        <id>Q9H0C1</id>
    </interactant>
    <interactant intactId="EBI-748043">
        <id>O43708</id>
        <label>GSTZ1</label>
    </interactant>
    <organismsDiffer>false</organismsDiffer>
    <experiments>3</experiments>
</comment>
<comment type="interaction">
    <interactant intactId="EBI-12030590">
        <id>Q9H0C1</id>
    </interactant>
    <interactant intactId="EBI-11956675">
        <id>Q9GZV7</id>
        <label>HAPLN2</label>
    </interactant>
    <organismsDiffer>false</organismsDiffer>
    <experiments>3</experiments>
</comment>
<comment type="interaction">
    <interactant intactId="EBI-12030590">
        <id>Q9H0C1</id>
    </interactant>
    <interactant intactId="EBI-11953488">
        <id>P56524-2</id>
        <label>HDAC4</label>
    </interactant>
    <organismsDiffer>false</organismsDiffer>
    <experiments>3</experiments>
</comment>
<comment type="interaction">
    <interactant intactId="EBI-12030590">
        <id>Q9H0C1</id>
    </interactant>
    <interactant intactId="EBI-3893317">
        <id>P09067</id>
        <label>HOXB5</label>
    </interactant>
    <organismsDiffer>false</organismsDiffer>
    <experiments>3</experiments>
</comment>
<comment type="interaction">
    <interactant intactId="EBI-12030590">
        <id>Q9H0C1</id>
    </interactant>
    <interactant intactId="EBI-1779423">
        <id>P31274</id>
        <label>HOXC9</label>
    </interactant>
    <organismsDiffer>false</organismsDiffer>
    <experiments>3</experiments>
</comment>
<comment type="interaction">
    <interactant intactId="EBI-12030590">
        <id>Q9H0C1</id>
    </interactant>
    <interactant intactId="EBI-2880706">
        <id>O43593</id>
        <label>HR</label>
    </interactant>
    <organismsDiffer>false</organismsDiffer>
    <experiments>3</experiments>
</comment>
<comment type="interaction">
    <interactant intactId="EBI-12030590">
        <id>Q9H0C1</id>
    </interactant>
    <interactant intactId="EBI-12056251">
        <id>Q9ULV5-2</id>
        <label>HSF4</label>
    </interactant>
    <organismsDiffer>false</organismsDiffer>
    <experiments>3</experiments>
</comment>
<comment type="interaction">
    <interactant intactId="EBI-12030590">
        <id>Q9H0C1</id>
    </interactant>
    <interactant intactId="EBI-357925">
        <id>Q12905</id>
        <label>ILF2</label>
    </interactant>
    <organismsDiffer>false</organismsDiffer>
    <experiments>3</experiments>
</comment>
<comment type="interaction">
    <interactant intactId="EBI-12030590">
        <id>Q9H0C1</id>
    </interactant>
    <interactant intactId="EBI-6509505">
        <id>Q0VD86</id>
        <label>INCA1</label>
    </interactant>
    <organismsDiffer>false</organismsDiffer>
    <experiments>3</experiments>
</comment>
<comment type="interaction">
    <interactant intactId="EBI-12030590">
        <id>Q9H0C1</id>
    </interactant>
    <interactant intactId="EBI-2556193">
        <id>Q63ZY3</id>
        <label>KANK2</label>
    </interactant>
    <organismsDiffer>false</organismsDiffer>
    <experiments>3</experiments>
</comment>
<comment type="interaction">
    <interactant intactId="EBI-12030590">
        <id>Q9H0C1</id>
    </interactant>
    <interactant intactId="EBI-726510">
        <id>Q96BZ8</id>
        <label>LENG1</label>
    </interactant>
    <organismsDiffer>false</organismsDiffer>
    <experiments>3</experiments>
</comment>
<comment type="interaction">
    <interactant intactId="EBI-12030590">
        <id>Q9H0C1</id>
    </interactant>
    <interactant intactId="EBI-11959475">
        <id>P25791-3</id>
        <label>LMO2</label>
    </interactant>
    <organismsDiffer>false</organismsDiffer>
    <experiments>3</experiments>
</comment>
<comment type="interaction">
    <interactant intactId="EBI-12030590">
        <id>Q9H0C1</id>
    </interactant>
    <interactant intactId="EBI-2798728">
        <id>P61968</id>
        <label>LMO4</label>
    </interactant>
    <organismsDiffer>false</organismsDiffer>
    <experiments>3</experiments>
</comment>
<comment type="interaction">
    <interactant intactId="EBI-12030590">
        <id>Q9H0C1</id>
    </interactant>
    <interactant intactId="EBI-77889">
        <id>Q9UI95</id>
        <label>MAD2L2</label>
    </interactant>
    <organismsDiffer>false</organismsDiffer>
    <experiments>3</experiments>
</comment>
<comment type="interaction">
    <interactant intactId="EBI-12030590">
        <id>Q9H0C1</id>
    </interactant>
    <interactant intactId="EBI-743811">
        <id>Q8NEH6</id>
        <label>MNS1</label>
    </interactant>
    <organismsDiffer>false</organismsDiffer>
    <experiments>3</experiments>
</comment>
<comment type="interaction">
    <interactant intactId="EBI-12030590">
        <id>Q9H0C1</id>
    </interactant>
    <interactant intactId="EBI-739825">
        <id>Q96BY2</id>
        <label>MOAP1</label>
    </interactant>
    <organismsDiffer>false</organismsDiffer>
    <experiments>5</experiments>
</comment>
<comment type="interaction">
    <interactant intactId="EBI-12030590">
        <id>Q9H0C1</id>
    </interactant>
    <interactant intactId="EBI-11991020">
        <id>A6NI15</id>
        <label>MSGN1</label>
    </interactant>
    <organismsDiffer>false</organismsDiffer>
    <experiments>5</experiments>
</comment>
<comment type="interaction">
    <interactant intactId="EBI-12030590">
        <id>Q9H0C1</id>
    </interactant>
    <interactant intactId="EBI-10699187">
        <id>Q8IXL7-2</id>
        <label>MSRB3</label>
    </interactant>
    <organismsDiffer>false</organismsDiffer>
    <experiments>3</experiments>
</comment>
<comment type="interaction">
    <interactant intactId="EBI-12030590">
        <id>Q9H0C1</id>
    </interactant>
    <interactant intactId="EBI-8641936">
        <id>Q15742</id>
        <label>NAB2</label>
    </interactant>
    <organismsDiffer>false</organismsDiffer>
    <experiments>3</experiments>
</comment>
<comment type="interaction">
    <interactant intactId="EBI-12030590">
        <id>Q9H0C1</id>
    </interactant>
    <interactant intactId="EBI-10297093">
        <id>Q9BRQ3</id>
        <label>NUDT22</label>
    </interactant>
    <organismsDiffer>false</organismsDiffer>
    <experiments>5</experiments>
</comment>
<comment type="interaction">
    <interactant intactId="EBI-12030590">
        <id>Q9H0C1</id>
    </interactant>
    <interactant intactId="EBI-17431136">
        <id>O60422</id>
        <label>ONECUT3</label>
    </interactant>
    <organismsDiffer>false</organismsDiffer>
    <experiments>3</experiments>
</comment>
<comment type="interaction">
    <interactant intactId="EBI-12030590">
        <id>Q9H0C1</id>
    </interactant>
    <interactant intactId="EBI-2562092">
        <id>Q86TB9</id>
        <label>PATL1</label>
    </interactant>
    <organismsDiffer>false</organismsDiffer>
    <experiments>3</experiments>
</comment>
<comment type="interaction">
    <interactant intactId="EBI-12030590">
        <id>Q9H0C1</id>
    </interactant>
    <interactant intactId="EBI-79165">
        <id>Q9NRD5</id>
        <label>PICK1</label>
    </interactant>
    <organismsDiffer>false</organismsDiffer>
    <experiments>3</experiments>
</comment>
<comment type="interaction">
    <interactant intactId="EBI-12030590">
        <id>Q9H0C1</id>
    </interactant>
    <interactant intactId="EBI-11956563">
        <id>Q96HA1-2</id>
        <label>POM121</label>
    </interactant>
    <organismsDiffer>false</organismsDiffer>
    <experiments>3</experiments>
</comment>
<comment type="interaction">
    <interactant intactId="EBI-12030590">
        <id>Q9H0C1</id>
    </interactant>
    <interactant intactId="EBI-12029004">
        <id>P78424</id>
        <label>POU6F2</label>
    </interactant>
    <organismsDiffer>false</organismsDiffer>
    <experiments>3</experiments>
</comment>
<comment type="interaction">
    <interactant intactId="EBI-12030590">
        <id>Q9H0C1</id>
    </interactant>
    <interactant intactId="EBI-2557469">
        <id>Q6NYC8</id>
        <label>PPP1R18</label>
    </interactant>
    <organismsDiffer>false</organismsDiffer>
    <experiments>3</experiments>
</comment>
<comment type="interaction">
    <interactant intactId="EBI-12030590">
        <id>Q9H0C1</id>
    </interactant>
    <interactant intactId="EBI-1383852">
        <id>P54646</id>
        <label>PRKAA2</label>
    </interactant>
    <organismsDiffer>false</organismsDiffer>
    <experiments>3</experiments>
</comment>
<comment type="interaction">
    <interactant intactId="EBI-12030590">
        <id>Q9H0C1</id>
    </interactant>
    <interactant intactId="EBI-11986293">
        <id>P0CG20</id>
        <label>PRR35</label>
    </interactant>
    <organismsDiffer>false</organismsDiffer>
    <experiments>3</experiments>
</comment>
<comment type="interaction">
    <interactant intactId="EBI-12030590">
        <id>Q9H0C1</id>
    </interactant>
    <interactant intactId="EBI-17437404">
        <id>B1AHC3</id>
        <label>PRR5-ARHGAP8</label>
    </interactant>
    <organismsDiffer>false</organismsDiffer>
    <experiments>3</experiments>
</comment>
<comment type="interaction">
    <interactant intactId="EBI-12030590">
        <id>Q9H0C1</id>
    </interactant>
    <interactant intactId="EBI-1567866">
        <id>Q6MZQ0</id>
        <label>PRR5L</label>
    </interactant>
    <organismsDiffer>false</organismsDiffer>
    <experiments>3</experiments>
</comment>
<comment type="interaction">
    <interactant intactId="EBI-12030590">
        <id>Q9H0C1</id>
    </interactant>
    <interactant intactId="EBI-372312">
        <id>P28062-2</id>
        <label>PSMB8</label>
    </interactant>
    <organismsDiffer>false</organismsDiffer>
    <experiments>3</experiments>
</comment>
<comment type="interaction">
    <interactant intactId="EBI-12030590">
        <id>Q9H0C1</id>
    </interactant>
    <interactant intactId="EBI-347462">
        <id>P47897</id>
        <label>QARS1</label>
    </interactant>
    <organismsDiffer>false</organismsDiffer>
    <experiments>5</experiments>
</comment>
<comment type="interaction">
    <interactant intactId="EBI-12030590">
        <id>Q9H0C1</id>
    </interactant>
    <interactant intactId="EBI-10226430">
        <id>Q0D2K3</id>
        <label>RIPPLY1</label>
    </interactant>
    <organismsDiffer>false</organismsDiffer>
    <experiments>3</experiments>
</comment>
<comment type="interaction">
    <interactant intactId="EBI-12030590">
        <id>Q9H0C1</id>
    </interactant>
    <interactant intactId="EBI-6257312">
        <id>Q9BVN2</id>
        <label>RUSC1</label>
    </interactant>
    <organismsDiffer>false</organismsDiffer>
    <experiments>5</experiments>
</comment>
<comment type="interaction">
    <interactant intactId="EBI-12030590">
        <id>Q9H0C1</id>
    </interactant>
    <interactant intactId="EBI-14067109">
        <id>Q96NU1</id>
        <label>SAMD11</label>
    </interactant>
    <organismsDiffer>false</organismsDiffer>
    <experiments>3</experiments>
</comment>
<comment type="interaction">
    <interactant intactId="EBI-12030590">
        <id>Q9H0C1</id>
    </interactant>
    <interactant intactId="EBI-3957636">
        <id>Q8IYX7</id>
        <label>SAXO1</label>
    </interactant>
    <organismsDiffer>false</organismsDiffer>
    <experiments>3</experiments>
</comment>
<comment type="interaction">
    <interactant intactId="EBI-12030590">
        <id>Q9H0C1</id>
    </interactant>
    <interactant intactId="EBI-12000762">
        <id>Q7Z5V6-2</id>
        <label>SAXO4</label>
    </interactant>
    <organismsDiffer>false</organismsDiffer>
    <experiments>3</experiments>
</comment>
<comment type="interaction">
    <interactant intactId="EBI-12030590">
        <id>Q9H0C1</id>
    </interactant>
    <interactant intactId="EBI-748391">
        <id>Q9BWG6</id>
        <label>SCNM1</label>
    </interactant>
    <organismsDiffer>false</organismsDiffer>
    <experiments>3</experiments>
</comment>
<comment type="interaction">
    <interactant intactId="EBI-12030590">
        <id>Q9H0C1</id>
    </interactant>
    <interactant intactId="EBI-727004">
        <id>O00560</id>
        <label>SDCBP</label>
    </interactant>
    <organismsDiffer>false</organismsDiffer>
    <experiments>3</experiments>
</comment>
<comment type="interaction">
    <interactant intactId="EBI-12030590">
        <id>Q9H0C1</id>
    </interactant>
    <interactant intactId="EBI-10320311">
        <id>Q9UDX3</id>
        <label>SEC14L4</label>
    </interactant>
    <organismsDiffer>false</organismsDiffer>
    <experiments>3</experiments>
</comment>
<comment type="interaction">
    <interactant intactId="EBI-12030590">
        <id>Q9H0C1</id>
    </interactant>
    <interactant intactId="EBI-747035">
        <id>Q9H788</id>
        <label>SH2D4A</label>
    </interactant>
    <organismsDiffer>false</organismsDiffer>
    <experiments>3</experiments>
</comment>
<comment type="interaction">
    <interactant intactId="EBI-12030590">
        <id>Q9H0C1</id>
    </interactant>
    <interactant intactId="EBI-79084">
        <id>Q92529</id>
        <label>SHC3</label>
    </interactant>
    <organismsDiffer>false</organismsDiffer>
    <experiments>3</experiments>
</comment>
<comment type="interaction">
    <interactant intactId="EBI-12030590">
        <id>Q9H0C1</id>
    </interactant>
    <interactant intactId="EBI-358489">
        <id>Q96GM5</id>
        <label>SMARCD1</label>
    </interactant>
    <organismsDiffer>false</organismsDiffer>
    <experiments>3</experiments>
</comment>
<comment type="interaction">
    <interactant intactId="EBI-12030590">
        <id>Q9H0C1</id>
    </interactant>
    <interactant intactId="EBI-2872322">
        <id>Q9H0W8</id>
        <label>SMG9</label>
    </interactant>
    <organismsDiffer>false</organismsDiffer>
    <experiments>3</experiments>
</comment>
<comment type="interaction">
    <interactant intactId="EBI-12030590">
        <id>Q9H0C1</id>
    </interactant>
    <interactant intactId="EBI-12288855">
        <id>Q5JUK2</id>
        <label>SOHLH1</label>
    </interactant>
    <organismsDiffer>false</organismsDiffer>
    <experiments>3</experiments>
</comment>
<comment type="interaction">
    <interactant intactId="EBI-12030590">
        <id>Q9H0C1</id>
    </interactant>
    <interactant intactId="EBI-742688">
        <id>Q9NZD8</id>
        <label>SPG21</label>
    </interactant>
    <organismsDiffer>false</organismsDiffer>
    <experiments>5</experiments>
</comment>
<comment type="interaction">
    <interactant intactId="EBI-12030590">
        <id>Q9H0C1</id>
    </interactant>
    <interactant intactId="EBI-5235340">
        <id>Q7Z699</id>
        <label>SPRED1</label>
    </interactant>
    <organismsDiffer>false</organismsDiffer>
    <experiments>3</experiments>
</comment>
<comment type="interaction">
    <interactant intactId="EBI-12030590">
        <id>Q9H0C1</id>
    </interactant>
    <interactant intactId="EBI-12036261">
        <id>Q7Z7C7</id>
        <label>STRA8</label>
    </interactant>
    <organismsDiffer>false</organismsDiffer>
    <experiments>3</experiments>
</comment>
<comment type="interaction">
    <interactant intactId="EBI-12030590">
        <id>Q9H0C1</id>
    </interactant>
    <interactant intactId="EBI-750487">
        <id>Q8WW24</id>
        <label>TEKT4</label>
    </interactant>
    <organismsDiffer>false</organismsDiffer>
    <experiments>3</experiments>
</comment>
<comment type="interaction">
    <interactant intactId="EBI-12030590">
        <id>Q9H0C1</id>
    </interactant>
    <interactant intactId="EBI-10239812">
        <id>Q96M29</id>
        <label>TEKT5</label>
    </interactant>
    <organismsDiffer>false</organismsDiffer>
    <experiments>5</experiments>
</comment>
<comment type="interaction">
    <interactant intactId="EBI-12030590">
        <id>Q9H0C1</id>
    </interactant>
    <interactant intactId="EBI-11139477">
        <id>Q96N21</id>
        <label>TEPSIN</label>
    </interactant>
    <organismsDiffer>false</organismsDiffer>
    <experiments>3</experiments>
</comment>
<comment type="interaction">
    <interactant intactId="EBI-12030590">
        <id>Q9H0C1</id>
    </interactant>
    <interactant intactId="EBI-11952651">
        <id>Q7Z6R9</id>
        <label>TFAP2D</label>
    </interactant>
    <organismsDiffer>false</organismsDiffer>
    <experiments>3</experiments>
</comment>
<comment type="interaction">
    <interactant intactId="EBI-12030590">
        <id>Q9H0C1</id>
    </interactant>
    <interactant intactId="EBI-1765605">
        <id>Q96FV9</id>
        <label>THOC1</label>
    </interactant>
    <organismsDiffer>false</organismsDiffer>
    <experiments>3</experiments>
</comment>
<comment type="interaction">
    <interactant intactId="EBI-12030590">
        <id>Q9H0C1</id>
    </interactant>
    <interactant intactId="EBI-1749955">
        <id>Q92748</id>
        <label>THRSP</label>
    </interactant>
    <organismsDiffer>false</organismsDiffer>
    <experiments>3</experiments>
</comment>
<comment type="interaction">
    <interactant intactId="EBI-12030590">
        <id>Q9H0C1</id>
    </interactant>
    <interactant intactId="EBI-11741437">
        <id>Q08117-2</id>
        <label>TLE5</label>
    </interactant>
    <organismsDiffer>false</organismsDiffer>
    <experiments>3</experiments>
</comment>
<comment type="interaction">
    <interactant intactId="EBI-12030590">
        <id>Q9H0C1</id>
    </interactant>
    <interactant intactId="EBI-2559824">
        <id>Q7Z6J9</id>
        <label>TSEN54</label>
    </interactant>
    <organismsDiffer>false</organismsDiffer>
    <experiments>3</experiments>
</comment>
<comment type="interaction">
    <interactant intactId="EBI-12030590">
        <id>Q9H0C1</id>
    </interactant>
    <interactant intactId="EBI-3918381">
        <id>Q96PN8</id>
        <label>TSSK3</label>
    </interactant>
    <organismsDiffer>false</organismsDiffer>
    <experiments>3</experiments>
</comment>
<comment type="interaction">
    <interactant intactId="EBI-12030590">
        <id>Q9H0C1</id>
    </interactant>
    <interactant intactId="EBI-14887934">
        <id>Q8TC83</id>
        <label>TTC29</label>
    </interactant>
    <organismsDiffer>false</organismsDiffer>
    <experiments>5</experiments>
</comment>
<comment type="interaction">
    <interactant intactId="EBI-12030590">
        <id>Q9H0C1</id>
    </interactant>
    <interactant intactId="EBI-2932492">
        <id>Q99757</id>
        <label>TXN2</label>
    </interactant>
    <organismsDiffer>false</organismsDiffer>
    <experiments>3</experiments>
</comment>
<comment type="interaction">
    <interactant intactId="EBI-12030590">
        <id>Q9H0C1</id>
    </interactant>
    <interactant intactId="EBI-2556931">
        <id>P19971</id>
        <label>TYMP</label>
    </interactant>
    <organismsDiffer>false</organismsDiffer>
    <experiments>3</experiments>
</comment>
<comment type="interaction">
    <interactant intactId="EBI-12030590">
        <id>Q9H0C1</id>
    </interactant>
    <interactant intactId="EBI-12238241">
        <id>Q8IV45</id>
        <label>UNC5CL</label>
    </interactant>
    <organismsDiffer>false</organismsDiffer>
    <experiments>5</experiments>
</comment>
<comment type="interaction">
    <interactant intactId="EBI-12030590">
        <id>Q9H0C1</id>
    </interactant>
    <interactant intactId="EBI-11980193">
        <id>Q14119</id>
        <label>VEZF1</label>
    </interactant>
    <organismsDiffer>false</organismsDiffer>
    <experiments>3</experiments>
</comment>
<comment type="interaction">
    <interactant intactId="EBI-12030590">
        <id>Q9H0C1</id>
    </interactant>
    <interactant intactId="EBI-2559305">
        <id>A5D8V6</id>
        <label>VPS37C</label>
    </interactant>
    <organismsDiffer>false</organismsDiffer>
    <experiments>3</experiments>
</comment>
<comment type="interaction">
    <interactant intactId="EBI-12030590">
        <id>Q9H0C1</id>
    </interactant>
    <interactant intactId="EBI-11742222">
        <id>Q9UQR1-2</id>
        <label>ZNF148</label>
    </interactant>
    <organismsDiffer>false</organismsDiffer>
    <experiments>3</experiments>
</comment>
<comment type="interaction">
    <interactant intactId="EBI-12030590">
        <id>Q9H0C1</id>
    </interactant>
    <interactant intactId="EBI-744257">
        <id>Q96IQ9</id>
        <label>ZNF414</label>
    </interactant>
    <organismsDiffer>false</organismsDiffer>
    <experiments>3</experiments>
</comment>
<comment type="subcellular location">
    <subcellularLocation>
        <location evidence="5">Cell projection</location>
        <location evidence="5">Cilium</location>
        <location evidence="5">Flagellum</location>
    </subcellularLocation>
    <text evidence="5">Found along the full length of the sperm flagellum.</text>
</comment>
<comment type="tissue specificity">
    <text evidence="5">Expressed predominantly in the testis.</text>
</comment>
<comment type="disease">
    <text evidence="5">Loss-of-function variants in ZMYND12 may play a role in male infertility characterized by severe asthenozoospermia with over 5% of the spermatozoa displaying flagellar abnormalities such as short, absent, coiled, bent, or irregular flagella.</text>
</comment>
<proteinExistence type="evidence at protein level"/>
<organism>
    <name type="scientific">Homo sapiens</name>
    <name type="common">Human</name>
    <dbReference type="NCBI Taxonomy" id="9606"/>
    <lineage>
        <taxon>Eukaryota</taxon>
        <taxon>Metazoa</taxon>
        <taxon>Chordata</taxon>
        <taxon>Craniata</taxon>
        <taxon>Vertebrata</taxon>
        <taxon>Euteleostomi</taxon>
        <taxon>Mammalia</taxon>
        <taxon>Eutheria</taxon>
        <taxon>Euarchontoglires</taxon>
        <taxon>Primates</taxon>
        <taxon>Haplorrhini</taxon>
        <taxon>Catarrhini</taxon>
        <taxon>Hominidae</taxon>
        <taxon>Homo</taxon>
    </lineage>
</organism>
<dbReference type="EMBL" id="AL136858">
    <property type="protein sequence ID" value="CAB66792.1"/>
    <property type="molecule type" value="mRNA"/>
</dbReference>
<dbReference type="EMBL" id="AK057384">
    <property type="protein sequence ID" value="BAB71461.1"/>
    <property type="molecule type" value="mRNA"/>
</dbReference>
<dbReference type="EMBL" id="AL513331">
    <property type="status" value="NOT_ANNOTATED_CDS"/>
    <property type="molecule type" value="Genomic_DNA"/>
</dbReference>
<dbReference type="EMBL" id="AL445669">
    <property type="status" value="NOT_ANNOTATED_CDS"/>
    <property type="molecule type" value="Genomic_DNA"/>
</dbReference>
<dbReference type="EMBL" id="BC024186">
    <property type="protein sequence ID" value="AAH24186.1"/>
    <property type="molecule type" value="mRNA"/>
</dbReference>
<dbReference type="CCDS" id="CCDS467.1"/>
<dbReference type="RefSeq" id="NP_001139664.1">
    <property type="nucleotide sequence ID" value="NM_001146192.1"/>
</dbReference>
<dbReference type="RefSeq" id="NP_115633.3">
    <property type="nucleotide sequence ID" value="NM_032257.4"/>
</dbReference>
<dbReference type="PDB" id="8J07">
    <property type="method" value="EM"/>
    <property type="resolution" value="4.10 A"/>
    <property type="chains" value="d4=1-365"/>
</dbReference>
<dbReference type="PDBsum" id="8J07"/>
<dbReference type="EMDB" id="EMD-35888"/>
<dbReference type="SMR" id="Q9H0C1"/>
<dbReference type="BioGRID" id="123951">
    <property type="interactions" value="81"/>
</dbReference>
<dbReference type="FunCoup" id="Q9H0C1">
    <property type="interactions" value="53"/>
</dbReference>
<dbReference type="IntAct" id="Q9H0C1">
    <property type="interactions" value="82"/>
</dbReference>
<dbReference type="STRING" id="9606.ENSP00000361646"/>
<dbReference type="PhosphoSitePlus" id="Q9H0C1"/>
<dbReference type="BioMuta" id="ZMYND12"/>
<dbReference type="DMDM" id="322510090"/>
<dbReference type="MassIVE" id="Q9H0C1"/>
<dbReference type="PaxDb" id="9606-ENSP00000361646"/>
<dbReference type="PeptideAtlas" id="Q9H0C1"/>
<dbReference type="ProteomicsDB" id="80250"/>
<dbReference type="Antibodypedia" id="32201">
    <property type="antibodies" value="45 antibodies from 15 providers"/>
</dbReference>
<dbReference type="DNASU" id="84217"/>
<dbReference type="Ensembl" id="ENST00000372565.8">
    <property type="protein sequence ID" value="ENSP00000361646.3"/>
    <property type="gene ID" value="ENSG00000066185.13"/>
</dbReference>
<dbReference type="GeneID" id="84217"/>
<dbReference type="KEGG" id="hsa:84217"/>
<dbReference type="MANE-Select" id="ENST00000372565.8">
    <property type="protein sequence ID" value="ENSP00000361646.3"/>
    <property type="RefSeq nucleotide sequence ID" value="NM_032257.5"/>
    <property type="RefSeq protein sequence ID" value="NP_115633.3"/>
</dbReference>
<dbReference type="UCSC" id="uc001chj.4">
    <property type="organism name" value="human"/>
</dbReference>
<dbReference type="AGR" id="HGNC:21192"/>
<dbReference type="CTD" id="84217"/>
<dbReference type="DisGeNET" id="84217"/>
<dbReference type="GeneCards" id="ZMYND12"/>
<dbReference type="HGNC" id="HGNC:21192">
    <property type="gene designation" value="ZMYND12"/>
</dbReference>
<dbReference type="HPA" id="ENSG00000066185">
    <property type="expression patterns" value="Tissue enhanced (fallopian tube, testis)"/>
</dbReference>
<dbReference type="MalaCards" id="ZMYND12"/>
<dbReference type="neXtProt" id="NX_Q9H0C1"/>
<dbReference type="OpenTargets" id="ENSG00000066185"/>
<dbReference type="PharmGKB" id="PA134993145"/>
<dbReference type="VEuPathDB" id="HostDB:ENSG00000066185"/>
<dbReference type="eggNOG" id="ENOG502QSY3">
    <property type="taxonomic scope" value="Eukaryota"/>
</dbReference>
<dbReference type="GeneTree" id="ENSGT00390000004248"/>
<dbReference type="HOGENOM" id="CLU_058444_1_1_1"/>
<dbReference type="InParanoid" id="Q9H0C1"/>
<dbReference type="OMA" id="KILFMLY"/>
<dbReference type="OrthoDB" id="3174329at2759"/>
<dbReference type="PAN-GO" id="Q9H0C1">
    <property type="GO annotations" value="0 GO annotations based on evolutionary models"/>
</dbReference>
<dbReference type="PhylomeDB" id="Q9H0C1"/>
<dbReference type="TreeFam" id="TF328348"/>
<dbReference type="PathwayCommons" id="Q9H0C1"/>
<dbReference type="SignaLink" id="Q9H0C1"/>
<dbReference type="BioGRID-ORCS" id="84217">
    <property type="hits" value="16 hits in 1152 CRISPR screens"/>
</dbReference>
<dbReference type="ChiTaRS" id="ZMYND12">
    <property type="organism name" value="human"/>
</dbReference>
<dbReference type="GenomeRNAi" id="84217"/>
<dbReference type="Pharos" id="Q9H0C1">
    <property type="development level" value="Tdark"/>
</dbReference>
<dbReference type="PRO" id="PR:Q9H0C1"/>
<dbReference type="Proteomes" id="UP000005640">
    <property type="component" value="Chromosome 1"/>
</dbReference>
<dbReference type="RNAct" id="Q9H0C1">
    <property type="molecule type" value="protein"/>
</dbReference>
<dbReference type="Bgee" id="ENSG00000066185">
    <property type="expression patterns" value="Expressed in sperm and 123 other cell types or tissues"/>
</dbReference>
<dbReference type="ExpressionAtlas" id="Q9H0C1">
    <property type="expression patterns" value="baseline and differential"/>
</dbReference>
<dbReference type="GO" id="GO:0036126">
    <property type="term" value="C:sperm flagellum"/>
    <property type="evidence" value="ECO:0000314"/>
    <property type="project" value="UniProtKB"/>
</dbReference>
<dbReference type="GO" id="GO:0008270">
    <property type="term" value="F:zinc ion binding"/>
    <property type="evidence" value="ECO:0007669"/>
    <property type="project" value="UniProtKB-KW"/>
</dbReference>
<dbReference type="GO" id="GO:0030317">
    <property type="term" value="P:flagellated sperm motility"/>
    <property type="evidence" value="ECO:0000315"/>
    <property type="project" value="UniProtKB"/>
</dbReference>
<dbReference type="GO" id="GO:0007288">
    <property type="term" value="P:sperm axoneme assembly"/>
    <property type="evidence" value="ECO:0000315"/>
    <property type="project" value="UniProtKB"/>
</dbReference>
<dbReference type="FunFam" id="1.25.40.10:FF:000438">
    <property type="entry name" value="Zinc finger MYND-type containing 12"/>
    <property type="match status" value="1"/>
</dbReference>
<dbReference type="Gene3D" id="6.10.140.2220">
    <property type="match status" value="1"/>
</dbReference>
<dbReference type="Gene3D" id="1.25.40.10">
    <property type="entry name" value="Tetratricopeptide repeat domain"/>
    <property type="match status" value="1"/>
</dbReference>
<dbReference type="InterPro" id="IPR011990">
    <property type="entry name" value="TPR-like_helical_dom_sf"/>
</dbReference>
<dbReference type="InterPro" id="IPR053248">
    <property type="entry name" value="Zinc_finger_MYND_domain"/>
</dbReference>
<dbReference type="InterPro" id="IPR002893">
    <property type="entry name" value="Znf_MYND"/>
</dbReference>
<dbReference type="PANTHER" id="PTHR46533">
    <property type="entry name" value="ZINC FINGER MYND DOMAIN-CONTAINING PROTEIN 12"/>
    <property type="match status" value="1"/>
</dbReference>
<dbReference type="PANTHER" id="PTHR46533:SF1">
    <property type="entry name" value="ZINC FINGER MYND DOMAIN-CONTAINING PROTEIN 12"/>
    <property type="match status" value="1"/>
</dbReference>
<dbReference type="Pfam" id="PF01753">
    <property type="entry name" value="zf-MYND"/>
    <property type="match status" value="1"/>
</dbReference>
<dbReference type="SUPFAM" id="SSF144232">
    <property type="entry name" value="HIT/MYND zinc finger-like"/>
    <property type="match status" value="1"/>
</dbReference>
<dbReference type="SUPFAM" id="SSF48452">
    <property type="entry name" value="TPR-like"/>
    <property type="match status" value="2"/>
</dbReference>
<dbReference type="PROSITE" id="PS01360">
    <property type="entry name" value="ZF_MYND_1"/>
    <property type="match status" value="1"/>
</dbReference>
<dbReference type="PROSITE" id="PS50865">
    <property type="entry name" value="ZF_MYND_2"/>
    <property type="match status" value="1"/>
</dbReference>
<protein>
    <recommendedName>
        <fullName>Zinc finger MYND domain-containing protein 12</fullName>
    </recommendedName>
</protein>
<reference key="1">
    <citation type="journal article" date="2001" name="Genome Res.">
        <title>Towards a catalog of human genes and proteins: sequencing and analysis of 500 novel complete protein coding human cDNAs.</title>
        <authorList>
            <person name="Wiemann S."/>
            <person name="Weil B."/>
            <person name="Wellenreuther R."/>
            <person name="Gassenhuber J."/>
            <person name="Glassl S."/>
            <person name="Ansorge W."/>
            <person name="Boecher M."/>
            <person name="Bloecker H."/>
            <person name="Bauersachs S."/>
            <person name="Blum H."/>
            <person name="Lauber J."/>
            <person name="Duesterhoeft A."/>
            <person name="Beyer A."/>
            <person name="Koehrer K."/>
            <person name="Strack N."/>
            <person name="Mewes H.-W."/>
            <person name="Ottenwaelder B."/>
            <person name="Obermaier B."/>
            <person name="Tampe J."/>
            <person name="Heubner D."/>
            <person name="Wambutt R."/>
            <person name="Korn B."/>
            <person name="Klein M."/>
            <person name="Poustka A."/>
        </authorList>
    </citation>
    <scope>NUCLEOTIDE SEQUENCE [LARGE SCALE MRNA]</scope>
    <scope>VARIANT LEU-316</scope>
    <source>
        <tissue>Testis</tissue>
    </source>
</reference>
<reference key="2">
    <citation type="journal article" date="2004" name="Nat. Genet.">
        <title>Complete sequencing and characterization of 21,243 full-length human cDNAs.</title>
        <authorList>
            <person name="Ota T."/>
            <person name="Suzuki Y."/>
            <person name="Nishikawa T."/>
            <person name="Otsuki T."/>
            <person name="Sugiyama T."/>
            <person name="Irie R."/>
            <person name="Wakamatsu A."/>
            <person name="Hayashi K."/>
            <person name="Sato H."/>
            <person name="Nagai K."/>
            <person name="Kimura K."/>
            <person name="Makita H."/>
            <person name="Sekine M."/>
            <person name="Obayashi M."/>
            <person name="Nishi T."/>
            <person name="Shibahara T."/>
            <person name="Tanaka T."/>
            <person name="Ishii S."/>
            <person name="Yamamoto J."/>
            <person name="Saito K."/>
            <person name="Kawai Y."/>
            <person name="Isono Y."/>
            <person name="Nakamura Y."/>
            <person name="Nagahari K."/>
            <person name="Murakami K."/>
            <person name="Yasuda T."/>
            <person name="Iwayanagi T."/>
            <person name="Wagatsuma M."/>
            <person name="Shiratori A."/>
            <person name="Sudo H."/>
            <person name="Hosoiri T."/>
            <person name="Kaku Y."/>
            <person name="Kodaira H."/>
            <person name="Kondo H."/>
            <person name="Sugawara M."/>
            <person name="Takahashi M."/>
            <person name="Kanda K."/>
            <person name="Yokoi T."/>
            <person name="Furuya T."/>
            <person name="Kikkawa E."/>
            <person name="Omura Y."/>
            <person name="Abe K."/>
            <person name="Kamihara K."/>
            <person name="Katsuta N."/>
            <person name="Sato K."/>
            <person name="Tanikawa M."/>
            <person name="Yamazaki M."/>
            <person name="Ninomiya K."/>
            <person name="Ishibashi T."/>
            <person name="Yamashita H."/>
            <person name="Murakawa K."/>
            <person name="Fujimori K."/>
            <person name="Tanai H."/>
            <person name="Kimata M."/>
            <person name="Watanabe M."/>
            <person name="Hiraoka S."/>
            <person name="Chiba Y."/>
            <person name="Ishida S."/>
            <person name="Ono Y."/>
            <person name="Takiguchi S."/>
            <person name="Watanabe S."/>
            <person name="Yosida M."/>
            <person name="Hotuta T."/>
            <person name="Kusano J."/>
            <person name="Kanehori K."/>
            <person name="Takahashi-Fujii A."/>
            <person name="Hara H."/>
            <person name="Tanase T.-O."/>
            <person name="Nomura Y."/>
            <person name="Togiya S."/>
            <person name="Komai F."/>
            <person name="Hara R."/>
            <person name="Takeuchi K."/>
            <person name="Arita M."/>
            <person name="Imose N."/>
            <person name="Musashino K."/>
            <person name="Yuuki H."/>
            <person name="Oshima A."/>
            <person name="Sasaki N."/>
            <person name="Aotsuka S."/>
            <person name="Yoshikawa Y."/>
            <person name="Matsunawa H."/>
            <person name="Ichihara T."/>
            <person name="Shiohata N."/>
            <person name="Sano S."/>
            <person name="Moriya S."/>
            <person name="Momiyama H."/>
            <person name="Satoh N."/>
            <person name="Takami S."/>
            <person name="Terashima Y."/>
            <person name="Suzuki O."/>
            <person name="Nakagawa S."/>
            <person name="Senoh A."/>
            <person name="Mizoguchi H."/>
            <person name="Goto Y."/>
            <person name="Shimizu F."/>
            <person name="Wakebe H."/>
            <person name="Hishigaki H."/>
            <person name="Watanabe T."/>
            <person name="Sugiyama A."/>
            <person name="Takemoto M."/>
            <person name="Kawakami B."/>
            <person name="Yamazaki M."/>
            <person name="Watanabe K."/>
            <person name="Kumagai A."/>
            <person name="Itakura S."/>
            <person name="Fukuzumi Y."/>
            <person name="Fujimori Y."/>
            <person name="Komiyama M."/>
            <person name="Tashiro H."/>
            <person name="Tanigami A."/>
            <person name="Fujiwara T."/>
            <person name="Ono T."/>
            <person name="Yamada K."/>
            <person name="Fujii Y."/>
            <person name="Ozaki K."/>
            <person name="Hirao M."/>
            <person name="Ohmori Y."/>
            <person name="Kawabata A."/>
            <person name="Hikiji T."/>
            <person name="Kobatake N."/>
            <person name="Inagaki H."/>
            <person name="Ikema Y."/>
            <person name="Okamoto S."/>
            <person name="Okitani R."/>
            <person name="Kawakami T."/>
            <person name="Noguchi S."/>
            <person name="Itoh T."/>
            <person name="Shigeta K."/>
            <person name="Senba T."/>
            <person name="Matsumura K."/>
            <person name="Nakajima Y."/>
            <person name="Mizuno T."/>
            <person name="Morinaga M."/>
            <person name="Sasaki M."/>
            <person name="Togashi T."/>
            <person name="Oyama M."/>
            <person name="Hata H."/>
            <person name="Watanabe M."/>
            <person name="Komatsu T."/>
            <person name="Mizushima-Sugano J."/>
            <person name="Satoh T."/>
            <person name="Shirai Y."/>
            <person name="Takahashi Y."/>
            <person name="Nakagawa K."/>
            <person name="Okumura K."/>
            <person name="Nagase T."/>
            <person name="Nomura N."/>
            <person name="Kikuchi H."/>
            <person name="Masuho Y."/>
            <person name="Yamashita R."/>
            <person name="Nakai K."/>
            <person name="Yada T."/>
            <person name="Nakamura Y."/>
            <person name="Ohara O."/>
            <person name="Isogai T."/>
            <person name="Sugano S."/>
        </authorList>
    </citation>
    <scope>NUCLEOTIDE SEQUENCE [LARGE SCALE MRNA]</scope>
    <scope>VARIANT LEU-316</scope>
    <source>
        <tissue>Testis</tissue>
    </source>
</reference>
<reference key="3">
    <citation type="journal article" date="2006" name="Nature">
        <title>The DNA sequence and biological annotation of human chromosome 1.</title>
        <authorList>
            <person name="Gregory S.G."/>
            <person name="Barlow K.F."/>
            <person name="McLay K.E."/>
            <person name="Kaul R."/>
            <person name="Swarbreck D."/>
            <person name="Dunham A."/>
            <person name="Scott C.E."/>
            <person name="Howe K.L."/>
            <person name="Woodfine K."/>
            <person name="Spencer C.C.A."/>
            <person name="Jones M.C."/>
            <person name="Gillson C."/>
            <person name="Searle S."/>
            <person name="Zhou Y."/>
            <person name="Kokocinski F."/>
            <person name="McDonald L."/>
            <person name="Evans R."/>
            <person name="Phillips K."/>
            <person name="Atkinson A."/>
            <person name="Cooper R."/>
            <person name="Jones C."/>
            <person name="Hall R.E."/>
            <person name="Andrews T.D."/>
            <person name="Lloyd C."/>
            <person name="Ainscough R."/>
            <person name="Almeida J.P."/>
            <person name="Ambrose K.D."/>
            <person name="Anderson F."/>
            <person name="Andrew R.W."/>
            <person name="Ashwell R.I.S."/>
            <person name="Aubin K."/>
            <person name="Babbage A.K."/>
            <person name="Bagguley C.L."/>
            <person name="Bailey J."/>
            <person name="Beasley H."/>
            <person name="Bethel G."/>
            <person name="Bird C.P."/>
            <person name="Bray-Allen S."/>
            <person name="Brown J.Y."/>
            <person name="Brown A.J."/>
            <person name="Buckley D."/>
            <person name="Burton J."/>
            <person name="Bye J."/>
            <person name="Carder C."/>
            <person name="Chapman J.C."/>
            <person name="Clark S.Y."/>
            <person name="Clarke G."/>
            <person name="Clee C."/>
            <person name="Cobley V."/>
            <person name="Collier R.E."/>
            <person name="Corby N."/>
            <person name="Coville G.J."/>
            <person name="Davies J."/>
            <person name="Deadman R."/>
            <person name="Dunn M."/>
            <person name="Earthrowl M."/>
            <person name="Ellington A.G."/>
            <person name="Errington H."/>
            <person name="Frankish A."/>
            <person name="Frankland J."/>
            <person name="French L."/>
            <person name="Garner P."/>
            <person name="Garnett J."/>
            <person name="Gay L."/>
            <person name="Ghori M.R.J."/>
            <person name="Gibson R."/>
            <person name="Gilby L.M."/>
            <person name="Gillett W."/>
            <person name="Glithero R.J."/>
            <person name="Grafham D.V."/>
            <person name="Griffiths C."/>
            <person name="Griffiths-Jones S."/>
            <person name="Grocock R."/>
            <person name="Hammond S."/>
            <person name="Harrison E.S.I."/>
            <person name="Hart E."/>
            <person name="Haugen E."/>
            <person name="Heath P.D."/>
            <person name="Holmes S."/>
            <person name="Holt K."/>
            <person name="Howden P.J."/>
            <person name="Hunt A.R."/>
            <person name="Hunt S.E."/>
            <person name="Hunter G."/>
            <person name="Isherwood J."/>
            <person name="James R."/>
            <person name="Johnson C."/>
            <person name="Johnson D."/>
            <person name="Joy A."/>
            <person name="Kay M."/>
            <person name="Kershaw J.K."/>
            <person name="Kibukawa M."/>
            <person name="Kimberley A.M."/>
            <person name="King A."/>
            <person name="Knights A.J."/>
            <person name="Lad H."/>
            <person name="Laird G."/>
            <person name="Lawlor S."/>
            <person name="Leongamornlert D.A."/>
            <person name="Lloyd D.M."/>
            <person name="Loveland J."/>
            <person name="Lovell J."/>
            <person name="Lush M.J."/>
            <person name="Lyne R."/>
            <person name="Martin S."/>
            <person name="Mashreghi-Mohammadi M."/>
            <person name="Matthews L."/>
            <person name="Matthews N.S.W."/>
            <person name="McLaren S."/>
            <person name="Milne S."/>
            <person name="Mistry S."/>
            <person name="Moore M.J.F."/>
            <person name="Nickerson T."/>
            <person name="O'Dell C.N."/>
            <person name="Oliver K."/>
            <person name="Palmeiri A."/>
            <person name="Palmer S.A."/>
            <person name="Parker A."/>
            <person name="Patel D."/>
            <person name="Pearce A.V."/>
            <person name="Peck A.I."/>
            <person name="Pelan S."/>
            <person name="Phelps K."/>
            <person name="Phillimore B.J."/>
            <person name="Plumb R."/>
            <person name="Rajan J."/>
            <person name="Raymond C."/>
            <person name="Rouse G."/>
            <person name="Saenphimmachak C."/>
            <person name="Sehra H.K."/>
            <person name="Sheridan E."/>
            <person name="Shownkeen R."/>
            <person name="Sims S."/>
            <person name="Skuce C.D."/>
            <person name="Smith M."/>
            <person name="Steward C."/>
            <person name="Subramanian S."/>
            <person name="Sycamore N."/>
            <person name="Tracey A."/>
            <person name="Tromans A."/>
            <person name="Van Helmond Z."/>
            <person name="Wall M."/>
            <person name="Wallis J.M."/>
            <person name="White S."/>
            <person name="Whitehead S.L."/>
            <person name="Wilkinson J.E."/>
            <person name="Willey D.L."/>
            <person name="Williams H."/>
            <person name="Wilming L."/>
            <person name="Wray P.W."/>
            <person name="Wu Z."/>
            <person name="Coulson A."/>
            <person name="Vaudin M."/>
            <person name="Sulston J.E."/>
            <person name="Durbin R.M."/>
            <person name="Hubbard T."/>
            <person name="Wooster R."/>
            <person name="Dunham I."/>
            <person name="Carter N.P."/>
            <person name="McVean G."/>
            <person name="Ross M.T."/>
            <person name="Harrow J."/>
            <person name="Olson M.V."/>
            <person name="Beck S."/>
            <person name="Rogers J."/>
            <person name="Bentley D.R."/>
        </authorList>
    </citation>
    <scope>NUCLEOTIDE SEQUENCE [LARGE SCALE GENOMIC DNA]</scope>
</reference>
<reference key="4">
    <citation type="journal article" date="2004" name="Genome Res.">
        <title>The status, quality, and expansion of the NIH full-length cDNA project: the Mammalian Gene Collection (MGC).</title>
        <authorList>
            <consortium name="The MGC Project Team"/>
        </authorList>
    </citation>
    <scope>NUCLEOTIDE SEQUENCE [LARGE SCALE MRNA]</scope>
    <scope>VARIANT LEU-316</scope>
    <source>
        <tissue>Testis</tissue>
    </source>
</reference>
<reference key="5">
    <citation type="journal article" date="2023" name="Elife">
        <title>Novel axonemal protein ZMYND12 interacts with TTC29 and DNAH1, and is required for male fertility and flagellum function.</title>
        <authorList>
            <person name="Dacheux D."/>
            <person name="Martinez G."/>
            <person name="Broster Reix C.E."/>
            <person name="Beurois J."/>
            <person name="Lores P."/>
            <person name="Tounkara M."/>
            <person name="Dupuy J.W."/>
            <person name="Robinson D.R."/>
            <person name="Loeuillet C."/>
            <person name="Lambert E."/>
            <person name="Wehbe Z."/>
            <person name="Escoffier J."/>
            <person name="Amiri-Yekta A."/>
            <person name="Daneshipour A."/>
            <person name="Hosseini S.H."/>
            <person name="Zouari R."/>
            <person name="Mustapha S.F.B."/>
            <person name="Halouani L."/>
            <person name="Jiang X."/>
            <person name="Shen Y."/>
            <person name="Liu C."/>
            <person name="Thierry-Mieg N."/>
            <person name="Septier A."/>
            <person name="Bidart M."/>
            <person name="Satre V."/>
            <person name="Cazin C."/>
            <person name="Kherraf Z.E."/>
            <person name="Arnoult C."/>
            <person name="Ray P.F."/>
            <person name="Toure A."/>
            <person name="Bonhivers M."/>
            <person name="Coutton C."/>
        </authorList>
    </citation>
    <scope>VARIANT 145-ARG--THR-365 DEL</scope>
    <scope>CHARACTERIZATION OF VARIANT 145-ARG--THR-365 DEL</scope>
    <scope>FUNCTION</scope>
    <scope>SUBCELLULAR LOCATION</scope>
    <scope>TISSUE SPECIFICITY</scope>
    <scope>INVOLVEMENT IN MALE INFERTILITY</scope>
</reference>
<keyword id="KW-0002">3D-structure</keyword>
<keyword id="KW-0966">Cell projection</keyword>
<keyword id="KW-0969">Cilium</keyword>
<keyword id="KW-0225">Disease variant</keyword>
<keyword id="KW-0282">Flagellum</keyword>
<keyword id="KW-0479">Metal-binding</keyword>
<keyword id="KW-1267">Proteomics identification</keyword>
<keyword id="KW-1185">Reference proteome</keyword>
<keyword id="KW-0677">Repeat</keyword>
<keyword id="KW-0802">TPR repeat</keyword>
<keyword id="KW-0862">Zinc</keyword>
<keyword id="KW-0863">Zinc-finger</keyword>